<comment type="function">
    <text evidence="1">Produces ATP from ADP in the presence of a proton gradient across the membrane. The gamma chain is believed to be important in regulating ATPase activity and the flow of protons through the CF(0) complex.</text>
</comment>
<comment type="subunit">
    <text evidence="1">F-type ATPases have 2 components, CF(1) - the catalytic core - and CF(0) - the membrane proton channel. CF(1) has five subunits: alpha(3), beta(3), gamma(1), delta(1), epsilon(1). CF(0) has three main subunits: a, b and c.</text>
</comment>
<comment type="subcellular location">
    <subcellularLocation>
        <location evidence="1">Cell inner membrane</location>
        <topology evidence="1">Peripheral membrane protein</topology>
    </subcellularLocation>
</comment>
<comment type="similarity">
    <text evidence="1">Belongs to the ATPase gamma chain family.</text>
</comment>
<keyword id="KW-0066">ATP synthesis</keyword>
<keyword id="KW-0997">Cell inner membrane</keyword>
<keyword id="KW-1003">Cell membrane</keyword>
<keyword id="KW-0139">CF(1)</keyword>
<keyword id="KW-0375">Hydrogen ion transport</keyword>
<keyword id="KW-0406">Ion transport</keyword>
<keyword id="KW-0472">Membrane</keyword>
<keyword id="KW-1185">Reference proteome</keyword>
<keyword id="KW-0813">Transport</keyword>
<name>ATPG2_PHOPR</name>
<protein>
    <recommendedName>
        <fullName evidence="1">ATP synthase gamma chain 2</fullName>
    </recommendedName>
    <alternativeName>
        <fullName evidence="1">ATP synthase F1 sector gamma subunit 2</fullName>
    </alternativeName>
    <alternativeName>
        <fullName evidence="1">F-ATPase gamma subunit 2</fullName>
    </alternativeName>
</protein>
<proteinExistence type="inferred from homology"/>
<dbReference type="EMBL" id="CR378675">
    <property type="protein sequence ID" value="CAG22008.1"/>
    <property type="molecule type" value="Genomic_DNA"/>
</dbReference>
<dbReference type="SMR" id="Q6LKZ7"/>
<dbReference type="STRING" id="298386.PBPRB0135"/>
<dbReference type="KEGG" id="ppr:PBPRB0135"/>
<dbReference type="eggNOG" id="COG0224">
    <property type="taxonomic scope" value="Bacteria"/>
</dbReference>
<dbReference type="HOGENOM" id="CLU_050669_0_1_6"/>
<dbReference type="Proteomes" id="UP000000593">
    <property type="component" value="Chromosome 2"/>
</dbReference>
<dbReference type="GO" id="GO:0005886">
    <property type="term" value="C:plasma membrane"/>
    <property type="evidence" value="ECO:0007669"/>
    <property type="project" value="UniProtKB-SubCell"/>
</dbReference>
<dbReference type="GO" id="GO:0045259">
    <property type="term" value="C:proton-transporting ATP synthase complex"/>
    <property type="evidence" value="ECO:0007669"/>
    <property type="project" value="UniProtKB-KW"/>
</dbReference>
<dbReference type="GO" id="GO:0005524">
    <property type="term" value="F:ATP binding"/>
    <property type="evidence" value="ECO:0007669"/>
    <property type="project" value="UniProtKB-UniRule"/>
</dbReference>
<dbReference type="GO" id="GO:0046933">
    <property type="term" value="F:proton-transporting ATP synthase activity, rotational mechanism"/>
    <property type="evidence" value="ECO:0007669"/>
    <property type="project" value="UniProtKB-UniRule"/>
</dbReference>
<dbReference type="GO" id="GO:0042777">
    <property type="term" value="P:proton motive force-driven plasma membrane ATP synthesis"/>
    <property type="evidence" value="ECO:0007669"/>
    <property type="project" value="UniProtKB-UniRule"/>
</dbReference>
<dbReference type="CDD" id="cd12151">
    <property type="entry name" value="F1-ATPase_gamma"/>
    <property type="match status" value="1"/>
</dbReference>
<dbReference type="FunFam" id="1.10.287.80:FF:000005">
    <property type="entry name" value="ATP synthase gamma chain"/>
    <property type="match status" value="2"/>
</dbReference>
<dbReference type="FunFam" id="3.40.1380.10:FF:000006">
    <property type="entry name" value="ATP synthase gamma chain"/>
    <property type="match status" value="1"/>
</dbReference>
<dbReference type="Gene3D" id="3.40.1380.10">
    <property type="match status" value="1"/>
</dbReference>
<dbReference type="Gene3D" id="1.10.287.80">
    <property type="entry name" value="ATP synthase, gamma subunit, helix hairpin domain"/>
    <property type="match status" value="2"/>
</dbReference>
<dbReference type="HAMAP" id="MF_00815">
    <property type="entry name" value="ATP_synth_gamma_bact"/>
    <property type="match status" value="1"/>
</dbReference>
<dbReference type="InterPro" id="IPR035968">
    <property type="entry name" value="ATP_synth_F1_ATPase_gsu"/>
</dbReference>
<dbReference type="InterPro" id="IPR000131">
    <property type="entry name" value="ATP_synth_F1_gsu"/>
</dbReference>
<dbReference type="InterPro" id="IPR023632">
    <property type="entry name" value="ATP_synth_F1_gsu_CS"/>
</dbReference>
<dbReference type="NCBIfam" id="TIGR01146">
    <property type="entry name" value="ATPsyn_F1gamma"/>
    <property type="match status" value="1"/>
</dbReference>
<dbReference type="NCBIfam" id="NF004144">
    <property type="entry name" value="PRK05621.1-1"/>
    <property type="match status" value="1"/>
</dbReference>
<dbReference type="PANTHER" id="PTHR11693">
    <property type="entry name" value="ATP SYNTHASE GAMMA CHAIN"/>
    <property type="match status" value="1"/>
</dbReference>
<dbReference type="PANTHER" id="PTHR11693:SF22">
    <property type="entry name" value="ATP SYNTHASE SUBUNIT GAMMA, MITOCHONDRIAL"/>
    <property type="match status" value="1"/>
</dbReference>
<dbReference type="Pfam" id="PF00231">
    <property type="entry name" value="ATP-synt"/>
    <property type="match status" value="1"/>
</dbReference>
<dbReference type="PRINTS" id="PR00126">
    <property type="entry name" value="ATPASEGAMMA"/>
</dbReference>
<dbReference type="SUPFAM" id="SSF52943">
    <property type="entry name" value="ATP synthase (F1-ATPase), gamma subunit"/>
    <property type="match status" value="1"/>
</dbReference>
<dbReference type="PROSITE" id="PS00153">
    <property type="entry name" value="ATPASE_GAMMA"/>
    <property type="match status" value="1"/>
</dbReference>
<organism>
    <name type="scientific">Photobacterium profundum (strain SS9)</name>
    <dbReference type="NCBI Taxonomy" id="298386"/>
    <lineage>
        <taxon>Bacteria</taxon>
        <taxon>Pseudomonadati</taxon>
        <taxon>Pseudomonadota</taxon>
        <taxon>Gammaproteobacteria</taxon>
        <taxon>Vibrionales</taxon>
        <taxon>Vibrionaceae</taxon>
        <taxon>Photobacterium</taxon>
    </lineage>
</organism>
<accession>Q6LKZ7</accession>
<gene>
    <name evidence="1" type="primary">atpG2</name>
    <name type="ordered locus">PBPRB0135</name>
</gene>
<reference key="1">
    <citation type="journal article" date="2005" name="Science">
        <title>Life at depth: Photobacterium profundum genome sequence and expression analysis.</title>
        <authorList>
            <person name="Vezzi A."/>
            <person name="Campanaro S."/>
            <person name="D'Angelo M."/>
            <person name="Simonato F."/>
            <person name="Vitulo N."/>
            <person name="Lauro F.M."/>
            <person name="Cestaro A."/>
            <person name="Malacrida G."/>
            <person name="Simionati B."/>
            <person name="Cannata N."/>
            <person name="Romualdi C."/>
            <person name="Bartlett D.H."/>
            <person name="Valle G."/>
        </authorList>
    </citation>
    <scope>NUCLEOTIDE SEQUENCE [LARGE SCALE GENOMIC DNA]</scope>
    <source>
        <strain>ATCC BAA-1253 / SS9</strain>
    </source>
</reference>
<sequence length="291" mass="32639">MANAKEIRTKIASVQNTQKITSAMEMVAASKMRKVQDNMAATRPYAENMRKVISHVASGSLEYKHPYLEEREAKRVAYIIISSDRGLCGGLNSNLFKRALTDMRQWQEKNVEVDLTLIGSKAISFFHRFGNVIAQTSGLGDKPKLEDLLGAVTAMLEHFDDGKIDRLYLVYNEFVNTMVQNPRITQLLPHPDKDESQDSKPNDATSRWDYIYEPDPKDILNALMLRYIESQVYQGTVESIACEQAARMVAMKSATDNAGDIINDLQLVYNKARQSAITQELSEIVAGAQAV</sequence>
<feature type="chain" id="PRO_0000073338" description="ATP synthase gamma chain 2">
    <location>
        <begin position="1"/>
        <end position="291"/>
    </location>
</feature>
<feature type="region of interest" description="Disordered" evidence="2">
    <location>
        <begin position="187"/>
        <end position="208"/>
    </location>
</feature>
<feature type="compositionally biased region" description="Basic and acidic residues" evidence="2">
    <location>
        <begin position="190"/>
        <end position="201"/>
    </location>
</feature>
<evidence type="ECO:0000255" key="1">
    <source>
        <dbReference type="HAMAP-Rule" id="MF_00815"/>
    </source>
</evidence>
<evidence type="ECO:0000256" key="2">
    <source>
        <dbReference type="SAM" id="MobiDB-lite"/>
    </source>
</evidence>